<sequence length="214" mass="24150">MTVKTQLNYQVYNWEGQVSGNADLNLKISKDSGMYLVHRALVKQSNEKRQGSANTKTRSEVRGGGRKPWRQKGTGRARAGSIRSPLWRGGGVIFGPKPRSFAKKMNKKESQLALRTALNNKSVNTLVVENFDTYFQKPKTKLFIEAITRWNLDLNKKLLVIVDKKDLNVYLSIRNLYNVEIISADTLNIMALLAAHKVIITVDALSKIQEVYNG</sequence>
<name>RK4_PORPU</name>
<evidence type="ECO:0000250" key="1"/>
<evidence type="ECO:0000256" key="2">
    <source>
        <dbReference type="SAM" id="MobiDB-lite"/>
    </source>
</evidence>
<evidence type="ECO:0000305" key="3"/>
<accession>P51313</accession>
<keyword id="KW-0150">Chloroplast</keyword>
<keyword id="KW-0934">Plastid</keyword>
<keyword id="KW-0687">Ribonucleoprotein</keyword>
<keyword id="KW-0689">Ribosomal protein</keyword>
<keyword id="KW-0694">RNA-binding</keyword>
<keyword id="KW-0699">rRNA-binding</keyword>
<reference key="1">
    <citation type="journal article" date="1995" name="Plant Mol. Biol. Rep.">
        <title>Complete nucleotide sequence of the Porphyra purpurea chloroplast genome.</title>
        <authorList>
            <person name="Reith M.E."/>
            <person name="Munholland J."/>
        </authorList>
    </citation>
    <scope>NUCLEOTIDE SEQUENCE [LARGE SCALE GENOMIC DNA]</scope>
    <source>
        <strain>Avonport</strain>
    </source>
</reference>
<organism>
    <name type="scientific">Porphyra purpurea</name>
    <name type="common">Red seaweed</name>
    <name type="synonym">Ulva purpurea</name>
    <dbReference type="NCBI Taxonomy" id="2787"/>
    <lineage>
        <taxon>Eukaryota</taxon>
        <taxon>Rhodophyta</taxon>
        <taxon>Bangiophyceae</taxon>
        <taxon>Bangiales</taxon>
        <taxon>Bangiaceae</taxon>
        <taxon>Porphyra</taxon>
    </lineage>
</organism>
<proteinExistence type="inferred from homology"/>
<protein>
    <recommendedName>
        <fullName evidence="3">Large ribosomal subunit protein uL4c</fullName>
    </recommendedName>
    <alternativeName>
        <fullName>50S ribosomal protein L4, chloroplastic</fullName>
    </alternativeName>
</protein>
<gene>
    <name type="primary">rpl4</name>
</gene>
<comment type="function">
    <text evidence="1">Probably binds the 23S rRNA.</text>
</comment>
<comment type="subunit">
    <text>Part of the 50S ribosomal subunit.</text>
</comment>
<comment type="subcellular location">
    <subcellularLocation>
        <location>Plastid</location>
        <location>Chloroplast</location>
    </subcellularLocation>
</comment>
<comment type="similarity">
    <text evidence="3">Belongs to the universal ribosomal protein uL4 family.</text>
</comment>
<geneLocation type="chloroplast"/>
<dbReference type="EMBL" id="U38804">
    <property type="protein sequence ID" value="AAC08199.1"/>
    <property type="molecule type" value="Genomic_DNA"/>
</dbReference>
<dbReference type="PIR" id="S73234">
    <property type="entry name" value="S73234"/>
</dbReference>
<dbReference type="RefSeq" id="NP_053923.1">
    <property type="nucleotide sequence ID" value="NC_000925.1"/>
</dbReference>
<dbReference type="SMR" id="P51313"/>
<dbReference type="GeneID" id="809942"/>
<dbReference type="GO" id="GO:0009507">
    <property type="term" value="C:chloroplast"/>
    <property type="evidence" value="ECO:0007669"/>
    <property type="project" value="UniProtKB-SubCell"/>
</dbReference>
<dbReference type="GO" id="GO:1990904">
    <property type="term" value="C:ribonucleoprotein complex"/>
    <property type="evidence" value="ECO:0007669"/>
    <property type="project" value="UniProtKB-KW"/>
</dbReference>
<dbReference type="GO" id="GO:0005840">
    <property type="term" value="C:ribosome"/>
    <property type="evidence" value="ECO:0007669"/>
    <property type="project" value="UniProtKB-KW"/>
</dbReference>
<dbReference type="GO" id="GO:0019843">
    <property type="term" value="F:rRNA binding"/>
    <property type="evidence" value="ECO:0007669"/>
    <property type="project" value="UniProtKB-UniRule"/>
</dbReference>
<dbReference type="GO" id="GO:0003735">
    <property type="term" value="F:structural constituent of ribosome"/>
    <property type="evidence" value="ECO:0007669"/>
    <property type="project" value="InterPro"/>
</dbReference>
<dbReference type="GO" id="GO:0006412">
    <property type="term" value="P:translation"/>
    <property type="evidence" value="ECO:0007669"/>
    <property type="project" value="UniProtKB-UniRule"/>
</dbReference>
<dbReference type="Gene3D" id="3.40.1370.10">
    <property type="match status" value="1"/>
</dbReference>
<dbReference type="HAMAP" id="MF_01328_B">
    <property type="entry name" value="Ribosomal_uL4_B"/>
    <property type="match status" value="1"/>
</dbReference>
<dbReference type="InterPro" id="IPR002136">
    <property type="entry name" value="Ribosomal_uL4"/>
</dbReference>
<dbReference type="InterPro" id="IPR013005">
    <property type="entry name" value="Ribosomal_uL4-like"/>
</dbReference>
<dbReference type="InterPro" id="IPR023574">
    <property type="entry name" value="Ribosomal_uL4_dom_sf"/>
</dbReference>
<dbReference type="NCBIfam" id="TIGR03953">
    <property type="entry name" value="rplD_bact"/>
    <property type="match status" value="1"/>
</dbReference>
<dbReference type="PANTHER" id="PTHR10746">
    <property type="entry name" value="50S RIBOSOMAL PROTEIN L4"/>
    <property type="match status" value="1"/>
</dbReference>
<dbReference type="PANTHER" id="PTHR10746:SF17">
    <property type="entry name" value="LARGE RIBOSOMAL SUBUNIT PROTEIN UL4C"/>
    <property type="match status" value="1"/>
</dbReference>
<dbReference type="Pfam" id="PF00573">
    <property type="entry name" value="Ribosomal_L4"/>
    <property type="match status" value="1"/>
</dbReference>
<dbReference type="SUPFAM" id="SSF52166">
    <property type="entry name" value="Ribosomal protein L4"/>
    <property type="match status" value="1"/>
</dbReference>
<feature type="chain" id="PRO_0000129326" description="Large ribosomal subunit protein uL4c">
    <location>
        <begin position="1"/>
        <end position="214"/>
    </location>
</feature>
<feature type="region of interest" description="Disordered" evidence="2">
    <location>
        <begin position="43"/>
        <end position="80"/>
    </location>
</feature>
<feature type="compositionally biased region" description="Basic residues" evidence="2">
    <location>
        <begin position="64"/>
        <end position="75"/>
    </location>
</feature>